<reference key="1">
    <citation type="journal article" date="2006" name="PLoS Genet.">
        <title>Comparative genomics of emerging human ehrlichiosis agents.</title>
        <authorList>
            <person name="Dunning Hotopp J.C."/>
            <person name="Lin M."/>
            <person name="Madupu R."/>
            <person name="Crabtree J."/>
            <person name="Angiuoli S.V."/>
            <person name="Eisen J.A."/>
            <person name="Seshadri R."/>
            <person name="Ren Q."/>
            <person name="Wu M."/>
            <person name="Utterback T.R."/>
            <person name="Smith S."/>
            <person name="Lewis M."/>
            <person name="Khouri H."/>
            <person name="Zhang C."/>
            <person name="Niu H."/>
            <person name="Lin Q."/>
            <person name="Ohashi N."/>
            <person name="Zhi N."/>
            <person name="Nelson W.C."/>
            <person name="Brinkac L.M."/>
            <person name="Dodson R.J."/>
            <person name="Rosovitz M.J."/>
            <person name="Sundaram J.P."/>
            <person name="Daugherty S.C."/>
            <person name="Davidsen T."/>
            <person name="Durkin A.S."/>
            <person name="Gwinn M.L."/>
            <person name="Haft D.H."/>
            <person name="Selengut J.D."/>
            <person name="Sullivan S.A."/>
            <person name="Zafar N."/>
            <person name="Zhou L."/>
            <person name="Benahmed F."/>
            <person name="Forberger H."/>
            <person name="Halpin R."/>
            <person name="Mulligan S."/>
            <person name="Robinson J."/>
            <person name="White O."/>
            <person name="Rikihisa Y."/>
            <person name="Tettelin H."/>
        </authorList>
    </citation>
    <scope>NUCLEOTIDE SEQUENCE [LARGE SCALE GENOMIC DNA]</scope>
    <source>
        <strain>ATCC CRL-10679 / Arkansas</strain>
    </source>
</reference>
<protein>
    <recommendedName>
        <fullName evidence="1">Polyribonucleotide nucleotidyltransferase</fullName>
        <ecNumber evidence="1">2.7.7.8</ecNumber>
    </recommendedName>
    <alternativeName>
        <fullName evidence="1">Polynucleotide phosphorylase</fullName>
        <shortName evidence="1">PNPase</shortName>
    </alternativeName>
</protein>
<accession>Q2GGA4</accession>
<evidence type="ECO:0000255" key="1">
    <source>
        <dbReference type="HAMAP-Rule" id="MF_01595"/>
    </source>
</evidence>
<evidence type="ECO:0000256" key="2">
    <source>
        <dbReference type="SAM" id="MobiDB-lite"/>
    </source>
</evidence>
<gene>
    <name evidence="1" type="primary">pnp</name>
    <name type="ordered locus">ECH_0726</name>
</gene>
<organism>
    <name type="scientific">Ehrlichia chaffeensis (strain ATCC CRL-10679 / Arkansas)</name>
    <dbReference type="NCBI Taxonomy" id="205920"/>
    <lineage>
        <taxon>Bacteria</taxon>
        <taxon>Pseudomonadati</taxon>
        <taxon>Pseudomonadota</taxon>
        <taxon>Alphaproteobacteria</taxon>
        <taxon>Rickettsiales</taxon>
        <taxon>Anaplasmataceae</taxon>
        <taxon>Ehrlichia</taxon>
    </lineage>
</organism>
<comment type="function">
    <text evidence="1">Involved in mRNA degradation. Catalyzes the phosphorolysis of single-stranded polyribonucleotides processively in the 3'- to 5'-direction.</text>
</comment>
<comment type="catalytic activity">
    <reaction evidence="1">
        <text>RNA(n+1) + phosphate = RNA(n) + a ribonucleoside 5'-diphosphate</text>
        <dbReference type="Rhea" id="RHEA:22096"/>
        <dbReference type="Rhea" id="RHEA-COMP:14527"/>
        <dbReference type="Rhea" id="RHEA-COMP:17342"/>
        <dbReference type="ChEBI" id="CHEBI:43474"/>
        <dbReference type="ChEBI" id="CHEBI:57930"/>
        <dbReference type="ChEBI" id="CHEBI:140395"/>
        <dbReference type="EC" id="2.7.7.8"/>
    </reaction>
</comment>
<comment type="cofactor">
    <cofactor evidence="1">
        <name>Mg(2+)</name>
        <dbReference type="ChEBI" id="CHEBI:18420"/>
    </cofactor>
</comment>
<comment type="subcellular location">
    <subcellularLocation>
        <location evidence="1">Cytoplasm</location>
    </subcellularLocation>
</comment>
<comment type="similarity">
    <text evidence="1">Belongs to the polyribonucleotide nucleotidyltransferase family.</text>
</comment>
<keyword id="KW-0963">Cytoplasm</keyword>
<keyword id="KW-0460">Magnesium</keyword>
<keyword id="KW-0479">Metal-binding</keyword>
<keyword id="KW-0548">Nucleotidyltransferase</keyword>
<keyword id="KW-1185">Reference proteome</keyword>
<keyword id="KW-0694">RNA-binding</keyword>
<keyword id="KW-0808">Transferase</keyword>
<proteinExistence type="inferred from homology"/>
<dbReference type="EC" id="2.7.7.8" evidence="1"/>
<dbReference type="EMBL" id="CP000236">
    <property type="protein sequence ID" value="ABD45222.1"/>
    <property type="molecule type" value="Genomic_DNA"/>
</dbReference>
<dbReference type="RefSeq" id="WP_011452780.1">
    <property type="nucleotide sequence ID" value="NC_007799.1"/>
</dbReference>
<dbReference type="SMR" id="Q2GGA4"/>
<dbReference type="STRING" id="205920.ECH_0726"/>
<dbReference type="KEGG" id="ech:ECH_0726"/>
<dbReference type="eggNOG" id="COG1185">
    <property type="taxonomic scope" value="Bacteria"/>
</dbReference>
<dbReference type="HOGENOM" id="CLU_004217_2_2_5"/>
<dbReference type="OrthoDB" id="9804305at2"/>
<dbReference type="Proteomes" id="UP000008320">
    <property type="component" value="Chromosome"/>
</dbReference>
<dbReference type="GO" id="GO:0005829">
    <property type="term" value="C:cytosol"/>
    <property type="evidence" value="ECO:0007669"/>
    <property type="project" value="TreeGrafter"/>
</dbReference>
<dbReference type="GO" id="GO:0000175">
    <property type="term" value="F:3'-5'-RNA exonuclease activity"/>
    <property type="evidence" value="ECO:0007669"/>
    <property type="project" value="TreeGrafter"/>
</dbReference>
<dbReference type="GO" id="GO:0000287">
    <property type="term" value="F:magnesium ion binding"/>
    <property type="evidence" value="ECO:0007669"/>
    <property type="project" value="UniProtKB-UniRule"/>
</dbReference>
<dbReference type="GO" id="GO:0004654">
    <property type="term" value="F:polyribonucleotide nucleotidyltransferase activity"/>
    <property type="evidence" value="ECO:0007669"/>
    <property type="project" value="UniProtKB-UniRule"/>
</dbReference>
<dbReference type="GO" id="GO:0003723">
    <property type="term" value="F:RNA binding"/>
    <property type="evidence" value="ECO:0007669"/>
    <property type="project" value="UniProtKB-UniRule"/>
</dbReference>
<dbReference type="GO" id="GO:0006402">
    <property type="term" value="P:mRNA catabolic process"/>
    <property type="evidence" value="ECO:0007669"/>
    <property type="project" value="UniProtKB-UniRule"/>
</dbReference>
<dbReference type="GO" id="GO:0006396">
    <property type="term" value="P:RNA processing"/>
    <property type="evidence" value="ECO:0007669"/>
    <property type="project" value="InterPro"/>
</dbReference>
<dbReference type="CDD" id="cd02393">
    <property type="entry name" value="KH-I_PNPase"/>
    <property type="match status" value="1"/>
</dbReference>
<dbReference type="CDD" id="cd11364">
    <property type="entry name" value="RNase_PH_PNPase_2"/>
    <property type="match status" value="1"/>
</dbReference>
<dbReference type="FunFam" id="3.30.1370.10:FF:000001">
    <property type="entry name" value="Polyribonucleotide nucleotidyltransferase"/>
    <property type="match status" value="1"/>
</dbReference>
<dbReference type="FunFam" id="3.30.230.70:FF:000001">
    <property type="entry name" value="Polyribonucleotide nucleotidyltransferase"/>
    <property type="match status" value="1"/>
</dbReference>
<dbReference type="FunFam" id="3.30.230.70:FF:000002">
    <property type="entry name" value="Polyribonucleotide nucleotidyltransferase"/>
    <property type="match status" value="1"/>
</dbReference>
<dbReference type="Gene3D" id="3.30.230.70">
    <property type="entry name" value="GHMP Kinase, N-terminal domain"/>
    <property type="match status" value="2"/>
</dbReference>
<dbReference type="Gene3D" id="3.30.1370.10">
    <property type="entry name" value="K Homology domain, type 1"/>
    <property type="match status" value="1"/>
</dbReference>
<dbReference type="Gene3D" id="2.40.50.140">
    <property type="entry name" value="Nucleic acid-binding proteins"/>
    <property type="match status" value="1"/>
</dbReference>
<dbReference type="HAMAP" id="MF_01595">
    <property type="entry name" value="PNPase"/>
    <property type="match status" value="1"/>
</dbReference>
<dbReference type="InterPro" id="IPR001247">
    <property type="entry name" value="ExoRNase_PH_dom1"/>
</dbReference>
<dbReference type="InterPro" id="IPR015847">
    <property type="entry name" value="ExoRNase_PH_dom2"/>
</dbReference>
<dbReference type="InterPro" id="IPR036345">
    <property type="entry name" value="ExoRNase_PH_dom2_sf"/>
</dbReference>
<dbReference type="InterPro" id="IPR004087">
    <property type="entry name" value="KH_dom"/>
</dbReference>
<dbReference type="InterPro" id="IPR004088">
    <property type="entry name" value="KH_dom_type_1"/>
</dbReference>
<dbReference type="InterPro" id="IPR036612">
    <property type="entry name" value="KH_dom_type_1_sf"/>
</dbReference>
<dbReference type="InterPro" id="IPR012340">
    <property type="entry name" value="NA-bd_OB-fold"/>
</dbReference>
<dbReference type="InterPro" id="IPR012162">
    <property type="entry name" value="PNPase"/>
</dbReference>
<dbReference type="InterPro" id="IPR027408">
    <property type="entry name" value="PNPase/RNase_PH_dom_sf"/>
</dbReference>
<dbReference type="InterPro" id="IPR015848">
    <property type="entry name" value="PNPase_PH_RNA-bd_bac/org-type"/>
</dbReference>
<dbReference type="InterPro" id="IPR036456">
    <property type="entry name" value="PNPase_PH_RNA-bd_sf"/>
</dbReference>
<dbReference type="InterPro" id="IPR020568">
    <property type="entry name" value="Ribosomal_Su5_D2-typ_SF"/>
</dbReference>
<dbReference type="InterPro" id="IPR003029">
    <property type="entry name" value="S1_domain"/>
</dbReference>
<dbReference type="NCBIfam" id="TIGR03591">
    <property type="entry name" value="polynuc_phos"/>
    <property type="match status" value="1"/>
</dbReference>
<dbReference type="NCBIfam" id="NF008805">
    <property type="entry name" value="PRK11824.1"/>
    <property type="match status" value="1"/>
</dbReference>
<dbReference type="PANTHER" id="PTHR11252">
    <property type="entry name" value="POLYRIBONUCLEOTIDE NUCLEOTIDYLTRANSFERASE"/>
    <property type="match status" value="1"/>
</dbReference>
<dbReference type="PANTHER" id="PTHR11252:SF0">
    <property type="entry name" value="POLYRIBONUCLEOTIDE NUCLEOTIDYLTRANSFERASE 1, MITOCHONDRIAL"/>
    <property type="match status" value="1"/>
</dbReference>
<dbReference type="Pfam" id="PF00013">
    <property type="entry name" value="KH_1"/>
    <property type="match status" value="1"/>
</dbReference>
<dbReference type="Pfam" id="PF03726">
    <property type="entry name" value="PNPase"/>
    <property type="match status" value="1"/>
</dbReference>
<dbReference type="Pfam" id="PF01138">
    <property type="entry name" value="RNase_PH"/>
    <property type="match status" value="2"/>
</dbReference>
<dbReference type="Pfam" id="PF03725">
    <property type="entry name" value="RNase_PH_C"/>
    <property type="match status" value="2"/>
</dbReference>
<dbReference type="Pfam" id="PF00575">
    <property type="entry name" value="S1"/>
    <property type="match status" value="1"/>
</dbReference>
<dbReference type="PIRSF" id="PIRSF005499">
    <property type="entry name" value="PNPase"/>
    <property type="match status" value="1"/>
</dbReference>
<dbReference type="SMART" id="SM00322">
    <property type="entry name" value="KH"/>
    <property type="match status" value="1"/>
</dbReference>
<dbReference type="SMART" id="SM00316">
    <property type="entry name" value="S1"/>
    <property type="match status" value="1"/>
</dbReference>
<dbReference type="SUPFAM" id="SSF54791">
    <property type="entry name" value="Eukaryotic type KH-domain (KH-domain type I)"/>
    <property type="match status" value="1"/>
</dbReference>
<dbReference type="SUPFAM" id="SSF50249">
    <property type="entry name" value="Nucleic acid-binding proteins"/>
    <property type="match status" value="1"/>
</dbReference>
<dbReference type="SUPFAM" id="SSF46915">
    <property type="entry name" value="Polynucleotide phosphorylase/guanosine pentaphosphate synthase (PNPase/GPSI), domain 3"/>
    <property type="match status" value="1"/>
</dbReference>
<dbReference type="SUPFAM" id="SSF55666">
    <property type="entry name" value="Ribonuclease PH domain 2-like"/>
    <property type="match status" value="2"/>
</dbReference>
<dbReference type="SUPFAM" id="SSF54211">
    <property type="entry name" value="Ribosomal protein S5 domain 2-like"/>
    <property type="match status" value="2"/>
</dbReference>
<dbReference type="PROSITE" id="PS50084">
    <property type="entry name" value="KH_TYPE_1"/>
    <property type="match status" value="1"/>
</dbReference>
<dbReference type="PROSITE" id="PS50126">
    <property type="entry name" value="S1"/>
    <property type="match status" value="1"/>
</dbReference>
<sequence length="796" mass="87103">MFNLIRRSAEWGGKTLVLESGKIARQASGAVMVSYAGTTVLATVVTGKTKEPVDFLPLTVQFVAKSYAVGKIPGGFLKREGKPSDRETLISRLIDRSIRPLFPAGFYDEISIVCNLLSYDTVTPPEVTALVGATAALSISGVPFNGLVVGARVGYLPSEGKYLLNASADEMLCSSLDLFLSGNEDSVLMVESEASELSESQMLGAITFGHQHCQEVINLIKEFSHESGQTPIDFIPHDISSLVSDIESSYKEDFSLAYSNTIKKERVLKLEELRGKVLSEVADKYSAGDVECSDQDIVTALKTFERSLVRSKIIDTSSRIDGRAFDEIRDIEIEVDVLPKAHGSALFTRGNTQALVVTALGTPQDEQIVDDLDGDRRENFLLHYNFPPYAVGESAALRAPGRREIGHGKLAWRAIRYVLPEKSDFPYTIRVVSEITESDGSSSMATVCGASLALMDTGVPIKSPVAGIAMGLIKEDDRFIILSDILGDEDHLGDMDFKVAGTAEGVTALQMDMKISGIDIDIIEKALLQAKDGRMHILSKMNAVIQESRNRIKNHAPRIESIFINKDKIRNVIGSGGKNIRDICEKTGAKIEIIQDGTVMIYAVNNEAVEYAKSMIMDIVTEPEIGKVFEGTVVEIMKFGAFVSFLGGKKGLVHISEIRNEHISSVGSVISLNDKVKVLVIGIDREHIQLSMRRVDQESGEPIDGELYNIRKNSFSDDSCGSTGGSSFKESYNPNSRHGSHEKKRSGGSSRSSRRNSNGPNYYREDLPSSNGFGNNNRSFSNSRNGHDVPRKPRFF</sequence>
<name>PNP_EHRCR</name>
<feature type="chain" id="PRO_0000329631" description="Polyribonucleotide nucleotidyltransferase">
    <location>
        <begin position="1"/>
        <end position="796"/>
    </location>
</feature>
<feature type="domain" description="KH" evidence="1">
    <location>
        <begin position="557"/>
        <end position="616"/>
    </location>
</feature>
<feature type="domain" description="S1 motif" evidence="1">
    <location>
        <begin position="626"/>
        <end position="693"/>
    </location>
</feature>
<feature type="region of interest" description="Disordered" evidence="2">
    <location>
        <begin position="717"/>
        <end position="796"/>
    </location>
</feature>
<feature type="compositionally biased region" description="Low complexity" evidence="2">
    <location>
        <begin position="717"/>
        <end position="728"/>
    </location>
</feature>
<feature type="compositionally biased region" description="Low complexity" evidence="2">
    <location>
        <begin position="747"/>
        <end position="759"/>
    </location>
</feature>
<feature type="compositionally biased region" description="Low complexity" evidence="2">
    <location>
        <begin position="769"/>
        <end position="784"/>
    </location>
</feature>
<feature type="compositionally biased region" description="Basic and acidic residues" evidence="2">
    <location>
        <begin position="785"/>
        <end position="796"/>
    </location>
</feature>
<feature type="binding site" evidence="1">
    <location>
        <position position="490"/>
    </location>
    <ligand>
        <name>Mg(2+)</name>
        <dbReference type="ChEBI" id="CHEBI:18420"/>
    </ligand>
</feature>
<feature type="binding site" evidence="1">
    <location>
        <position position="496"/>
    </location>
    <ligand>
        <name>Mg(2+)</name>
        <dbReference type="ChEBI" id="CHEBI:18420"/>
    </ligand>
</feature>